<evidence type="ECO:0000250" key="1">
    <source>
        <dbReference type="UniProtKB" id="P97463"/>
    </source>
</evidence>
<evidence type="ECO:0000255" key="2"/>
<evidence type="ECO:0000256" key="3">
    <source>
        <dbReference type="SAM" id="MobiDB-lite"/>
    </source>
</evidence>
<evidence type="ECO:0000269" key="4">
    <source>
    </source>
</evidence>
<evidence type="ECO:0000269" key="5">
    <source>
    </source>
</evidence>
<evidence type="ECO:0000269" key="6">
    <source>
    </source>
</evidence>
<evidence type="ECO:0000269" key="7">
    <source>
    </source>
</evidence>
<evidence type="ECO:0000269" key="8">
    <source>
    </source>
</evidence>
<evidence type="ECO:0000269" key="9">
    <source>
    </source>
</evidence>
<evidence type="ECO:0000303" key="10">
    <source>
    </source>
</evidence>
<evidence type="ECO:0000303" key="11">
    <source>
    </source>
</evidence>
<evidence type="ECO:0000305" key="12"/>
<evidence type="ECO:0000312" key="13">
    <source>
        <dbReference type="HGNC" id="HGNC:8007"/>
    </source>
</evidence>
<evidence type="ECO:0007744" key="14">
    <source>
        <dbReference type="PDB" id="5MR4"/>
    </source>
</evidence>
<evidence type="ECO:0007744" key="15">
    <source>
        <dbReference type="PDB" id="5MR5"/>
    </source>
</evidence>
<evidence type="ECO:0007744" key="16">
    <source>
        <dbReference type="PDB" id="5MR9"/>
    </source>
</evidence>
<evidence type="ECO:0007744" key="17">
    <source>
        <dbReference type="PDB" id="5NMZ"/>
    </source>
</evidence>
<evidence type="ECO:0007744" key="18">
    <source>
        <dbReference type="PDB" id="6GL7"/>
    </source>
</evidence>
<evidence type="ECO:0007744" key="19">
    <source>
        <dbReference type="PDB" id="6Q2O"/>
    </source>
</evidence>
<evidence type="ECO:0007744" key="20">
    <source>
        <dbReference type="PDB" id="6Q2R"/>
    </source>
</evidence>
<evidence type="ECO:0007829" key="21">
    <source>
        <dbReference type="PDB" id="5NMZ"/>
    </source>
</evidence>
<accession>Q99748</accession>
<accession>B2RPE8</accession>
<name>NRTN_HUMAN</name>
<comment type="function">
    <text evidence="4 5 6 7 8">Growth factor that supports the survival of sympathetic neurons in culture (PubMed:8945474). May regulate the development and maintenance of the CNS (PubMed:8945474). Involved in the development of the neural crest (PubMed:15242795). Might control the size of non-neuronal cell population such as haemopoietic cells (PubMed:8945474). Acts by binding to its coreceptor, GFRA2, leading to autophosphorylation and activation of the RET receptor (PubMed:10829012, PubMed:29414779, PubMed:31535977). Heparan sulfate-binding is required for signaling (PubMed:29414779).</text>
</comment>
<comment type="subunit">
    <text evidence="6 7">Homodimer; disulfide-linked (PubMed:29414779, PubMed:31535977). Interacts with GFRA2 coreceptor and RET: forms a 2:2:2 ternary complex composed of NRTN ligand, GFRA2 and RET receptor (PubMed:31535977). Also forms a 4:4:4 tetrameric complex composed of 4 copies of NRTN ligand, GFRA2 and RET receptor, which prevents endocytosis of RET (PubMed:31535977).</text>
</comment>
<comment type="subcellular location">
    <subcellularLocation>
        <location evidence="1">Secreted</location>
    </subcellularLocation>
</comment>
<comment type="disease">
    <text evidence="9">Genetic variations in NRTN may contribute to Hirschsprung disease, in association with mutations of RET gene, and possibly mutations in other loci. Hirschsprung disease is a disorder of neural crest development is characterized by the absence of intramural ganglion cells in the hindgut, often resulting in intestinal obstruction.</text>
</comment>
<comment type="similarity">
    <text evidence="12">Belongs to the TGF-beta family. GDNF subfamily.</text>
</comment>
<gene>
    <name evidence="10 13" type="primary">NRTN</name>
</gene>
<keyword id="KW-0002">3D-structure</keyword>
<keyword id="KW-0225">Disease variant</keyword>
<keyword id="KW-1015">Disulfide bond</keyword>
<keyword id="KW-0339">Growth factor</keyword>
<keyword id="KW-0367">Hirschsprung disease</keyword>
<keyword id="KW-1185">Reference proteome</keyword>
<keyword id="KW-0964">Secreted</keyword>
<keyword id="KW-0732">Signal</keyword>
<organism>
    <name type="scientific">Homo sapiens</name>
    <name type="common">Human</name>
    <dbReference type="NCBI Taxonomy" id="9606"/>
    <lineage>
        <taxon>Eukaryota</taxon>
        <taxon>Metazoa</taxon>
        <taxon>Chordata</taxon>
        <taxon>Craniata</taxon>
        <taxon>Vertebrata</taxon>
        <taxon>Euteleostomi</taxon>
        <taxon>Mammalia</taxon>
        <taxon>Eutheria</taxon>
        <taxon>Euarchontoglires</taxon>
        <taxon>Primates</taxon>
        <taxon>Haplorrhini</taxon>
        <taxon>Catarrhini</taxon>
        <taxon>Hominidae</taxon>
        <taxon>Homo</taxon>
    </lineage>
</organism>
<proteinExistence type="evidence at protein level"/>
<protein>
    <recommendedName>
        <fullName evidence="11">Neurturin</fullName>
    </recommendedName>
</protein>
<sequence>MQRWKAAALASVLCSSVLSIWMCREGLLLSHRLGPALVPLHRLPRTLDARIARLAQYRALLQGAPDAMELRELTPWAGRPPGPRRRAGPRRRRARARLGARPCGLRELEVRVSELGLGYASDETVLFRYCAGACEAAARVYDLGLRRLRQRRRLRRERVRAQPCCRPTAYEDEVSFLDAHSRYHTVHELSARECACV</sequence>
<reference key="1">
    <citation type="journal article" date="1996" name="Nature">
        <title>Neurturin, a relative of glial-cell-line-derived neurotrophic factor.</title>
        <authorList>
            <person name="Kotzbauer P.T."/>
            <person name="Lampe P.A."/>
            <person name="Heuckeroth R.O."/>
            <person name="Golden J.P."/>
            <person name="Creedon D.J."/>
            <person name="Johnson E.M. Jr."/>
            <person name="Milbrandt J."/>
        </authorList>
    </citation>
    <scope>NUCLEOTIDE SEQUENCE [MRNA]</scope>
    <scope>FUNCTION</scope>
</reference>
<reference key="2">
    <citation type="journal article" date="2007" name="BMC Genomics">
        <title>The full-ORF clone resource of the German cDNA consortium.</title>
        <authorList>
            <person name="Bechtel S."/>
            <person name="Rosenfelder H."/>
            <person name="Duda A."/>
            <person name="Schmidt C.P."/>
            <person name="Ernst U."/>
            <person name="Wellenreuther R."/>
            <person name="Mehrle A."/>
            <person name="Schuster C."/>
            <person name="Bahr A."/>
            <person name="Bloecker H."/>
            <person name="Heubner D."/>
            <person name="Hoerlein A."/>
            <person name="Michel G."/>
            <person name="Wedler H."/>
            <person name="Koehrer K."/>
            <person name="Ottenwaelder B."/>
            <person name="Poustka A."/>
            <person name="Wiemann S."/>
            <person name="Schupp I."/>
        </authorList>
    </citation>
    <scope>NUCLEOTIDE SEQUENCE [LARGE SCALE MRNA]</scope>
    <source>
        <tissue>Melanoma</tissue>
    </source>
</reference>
<reference key="3">
    <citation type="submission" date="2005-09" db="EMBL/GenBank/DDBJ databases">
        <authorList>
            <person name="Mural R.J."/>
            <person name="Istrail S."/>
            <person name="Sutton G.G."/>
            <person name="Florea L."/>
            <person name="Halpern A.L."/>
            <person name="Mobarry C.M."/>
            <person name="Lippert R."/>
            <person name="Walenz B."/>
            <person name="Shatkay H."/>
            <person name="Dew I."/>
            <person name="Miller J.R."/>
            <person name="Flanigan M.J."/>
            <person name="Edwards N.J."/>
            <person name="Bolanos R."/>
            <person name="Fasulo D."/>
            <person name="Halldorsson B.V."/>
            <person name="Hannenhalli S."/>
            <person name="Turner R."/>
            <person name="Yooseph S."/>
            <person name="Lu F."/>
            <person name="Nusskern D.R."/>
            <person name="Shue B.C."/>
            <person name="Zheng X.H."/>
            <person name="Zhong F."/>
            <person name="Delcher A.L."/>
            <person name="Huson D.H."/>
            <person name="Kravitz S.A."/>
            <person name="Mouchard L."/>
            <person name="Reinert K."/>
            <person name="Remington K.A."/>
            <person name="Clark A.G."/>
            <person name="Waterman M.S."/>
            <person name="Eichler E.E."/>
            <person name="Adams M.D."/>
            <person name="Hunkapiller M.W."/>
            <person name="Myers E.W."/>
            <person name="Venter J.C."/>
        </authorList>
    </citation>
    <scope>NUCLEOTIDE SEQUENCE [LARGE SCALE GENOMIC DNA]</scope>
</reference>
<reference key="4">
    <citation type="journal article" date="2004" name="Genome Res.">
        <title>The status, quality, and expansion of the NIH full-length cDNA project: the Mammalian Gene Collection (MGC).</title>
        <authorList>
            <consortium name="The MGC Project Team"/>
        </authorList>
    </citation>
    <scope>NUCLEOTIDE SEQUENCE [LARGE SCALE MRNA]</scope>
</reference>
<reference key="5">
    <citation type="journal article" date="2000" name="J. Biol. Chem.">
        <title>Binding of GDNF and neurturin to human GDNF family receptor alpha 1 and 2. Influence of cRET and cooperative interactions.</title>
        <authorList>
            <person name="Cik M."/>
            <person name="Masure S."/>
            <person name="Lesage A.S."/>
            <person name="Van Der Linden I."/>
            <person name="Van Gompel P."/>
            <person name="Pangalos M.N."/>
            <person name="Gordon R.D."/>
            <person name="Leysen J.E."/>
        </authorList>
    </citation>
    <scope>FUNCTION</scope>
</reference>
<reference key="6">
    <citation type="journal article" date="2004" name="Dev. Biol.">
        <title>Neural cells in the esophagus respond to glial cell line-derived neurotrophic factor and neurturin, and are RET-dependent.</title>
        <authorList>
            <person name="Yan H."/>
            <person name="Bergner A.J."/>
            <person name="Enomoto H."/>
            <person name="Milbrandt J."/>
            <person name="Newgreen D.F."/>
            <person name="Young H.M."/>
        </authorList>
    </citation>
    <scope>FUNCTION</scope>
</reference>
<reference evidence="14 15 17" key="7">
    <citation type="journal article" date="2018" name="J. Biol. Chem.">
        <title>Structure and biophysical characterization of the human full-length neurturin-GFRa2 complex: A role for heparan sulfate in signaling.</title>
        <authorList>
            <person name="Sandmark J."/>
            <person name="Dahl G."/>
            <person name="Oester L."/>
            <person name="Xu B."/>
            <person name="Johansson P."/>
            <person name="Akerud T."/>
            <person name="Aagaard A."/>
            <person name="Davidsson P."/>
            <person name="Bigalke J.M."/>
            <person name="Winzell M.S."/>
            <person name="Rainey G.J."/>
            <person name="Roth R.G."/>
        </authorList>
    </citation>
    <scope>X-RAY CRYSTALLOGRAPHY (1.60 ANGSTROMS) OF 97-197 IN COMPLEX WITH GFRA2</scope>
    <scope>FUNCTION</scope>
    <scope>SUBUNIT</scope>
    <scope>DISULFIDE BONDS</scope>
    <scope>MUTAGENESIS OF 158-ARG--GLN-162</scope>
</reference>
<reference evidence="19 20" key="8">
    <citation type="journal article" date="2019" name="Elife">
        <title>Cryo-EM analyses reveal the common mechanism and diversification in the activation of RET by different ligands.</title>
        <authorList>
            <person name="Li J."/>
            <person name="Shang G."/>
            <person name="Chen Y.J."/>
            <person name="Brautigam C.A."/>
            <person name="Liou J."/>
            <person name="Zhang X."/>
            <person name="Bai X.C."/>
        </authorList>
    </citation>
    <scope>STRUCTURE BY ELECTRON MICROSCOPY (3.65 ANGSTROMS) OF 96-197 IN COMPLEX WITH RET AND GFRA2</scope>
    <scope>FUNCTION</scope>
    <scope>SUBUNIT</scope>
    <scope>DISULFIDE BONDS</scope>
</reference>
<reference key="9">
    <citation type="journal article" date="1998" name="Hum. Mol. Genet.">
        <title>Mutation of the RET ligand, neurturin, supports multigenic inheritance in Hirschsprung disease.</title>
        <authorList>
            <person name="Doray B."/>
            <person name="Salomon R."/>
            <person name="Amiel J."/>
            <person name="Pelet A."/>
            <person name="Touraine R."/>
            <person name="Billaud M."/>
            <person name="Attie T."/>
            <person name="Bachy B."/>
            <person name="Munnich A."/>
            <person name="Lyonnet S."/>
        </authorList>
    </citation>
    <scope>VARIANT SER-96</scope>
    <scope>POSSIBLE INVOLVEMENT IN HIRSCHSPRUNG DISEASE</scope>
    <source>
        <tissue>Peripheral blood lymphocyte</tissue>
    </source>
</reference>
<dbReference type="EMBL" id="U78110">
    <property type="protein sequence ID" value="AAC50898.1"/>
    <property type="molecule type" value="mRNA"/>
</dbReference>
<dbReference type="EMBL" id="AL161995">
    <property type="protein sequence ID" value="CAB82327.1"/>
    <property type="molecule type" value="mRNA"/>
</dbReference>
<dbReference type="EMBL" id="CH471139">
    <property type="protein sequence ID" value="EAW69140.1"/>
    <property type="molecule type" value="Genomic_DNA"/>
</dbReference>
<dbReference type="EMBL" id="BC137399">
    <property type="protein sequence ID" value="AAI37400.1"/>
    <property type="molecule type" value="mRNA"/>
</dbReference>
<dbReference type="EMBL" id="BC137400">
    <property type="protein sequence ID" value="AAI37401.1"/>
    <property type="molecule type" value="mRNA"/>
</dbReference>
<dbReference type="CCDS" id="CCDS12151.1"/>
<dbReference type="PIR" id="T47159">
    <property type="entry name" value="T47159"/>
</dbReference>
<dbReference type="RefSeq" id="NP_004549.1">
    <property type="nucleotide sequence ID" value="NM_004558.5"/>
</dbReference>
<dbReference type="RefSeq" id="XP_011526343.1">
    <property type="nucleotide sequence ID" value="XM_011528041.2"/>
</dbReference>
<dbReference type="RefSeq" id="XP_047294846.1">
    <property type="nucleotide sequence ID" value="XM_047438890.1"/>
</dbReference>
<dbReference type="RefSeq" id="XP_054177095.1">
    <property type="nucleotide sequence ID" value="XM_054321120.1"/>
</dbReference>
<dbReference type="PDB" id="5MR4">
    <property type="method" value="X-ray"/>
    <property type="resolution" value="2.40 A"/>
    <property type="chains" value="A/B=96-197"/>
</dbReference>
<dbReference type="PDB" id="5MR5">
    <property type="method" value="X-ray"/>
    <property type="resolution" value="2.00 A"/>
    <property type="chains" value="A/B=96-197"/>
</dbReference>
<dbReference type="PDB" id="5MR9">
    <property type="method" value="X-ray"/>
    <property type="resolution" value="2.40 A"/>
    <property type="chains" value="A/B=96-197"/>
</dbReference>
<dbReference type="PDB" id="5NMZ">
    <property type="method" value="X-ray"/>
    <property type="resolution" value="1.60 A"/>
    <property type="chains" value="A/B/C/D=97-197"/>
</dbReference>
<dbReference type="PDB" id="6GL7">
    <property type="method" value="EM"/>
    <property type="resolution" value="6.30 A"/>
    <property type="chains" value="A/B=96-197"/>
</dbReference>
<dbReference type="PDB" id="6Q2O">
    <property type="method" value="EM"/>
    <property type="resolution" value="3.65 A"/>
    <property type="chains" value="A/B=96-197"/>
</dbReference>
<dbReference type="PDB" id="6Q2R">
    <property type="method" value="EM"/>
    <property type="resolution" value="4.30 A"/>
    <property type="chains" value="A/B/U/V=96-197"/>
</dbReference>
<dbReference type="PDBsum" id="5MR4"/>
<dbReference type="PDBsum" id="5MR5"/>
<dbReference type="PDBsum" id="5MR9"/>
<dbReference type="PDBsum" id="5NMZ"/>
<dbReference type="PDBsum" id="6GL7"/>
<dbReference type="PDBsum" id="6Q2O"/>
<dbReference type="PDBsum" id="6Q2R"/>
<dbReference type="EMDB" id="EMD-0026"/>
<dbReference type="EMDB" id="EMD-20576"/>
<dbReference type="EMDB" id="EMD-20578"/>
<dbReference type="SMR" id="Q99748"/>
<dbReference type="BioGRID" id="110958">
    <property type="interactions" value="3"/>
</dbReference>
<dbReference type="CORUM" id="Q99748"/>
<dbReference type="FunCoup" id="Q99748">
    <property type="interactions" value="553"/>
</dbReference>
<dbReference type="STRING" id="9606.ENSP00000302648"/>
<dbReference type="PhosphoSitePlus" id="Q99748"/>
<dbReference type="BioMuta" id="NRTN"/>
<dbReference type="DMDM" id="2501180"/>
<dbReference type="jPOST" id="Q99748"/>
<dbReference type="MassIVE" id="Q99748"/>
<dbReference type="PaxDb" id="9606-ENSP00000302648"/>
<dbReference type="Antibodypedia" id="11762">
    <property type="antibodies" value="475 antibodies from 39 providers"/>
</dbReference>
<dbReference type="DNASU" id="4902"/>
<dbReference type="Ensembl" id="ENST00000303212.3">
    <property type="protein sequence ID" value="ENSP00000302648.1"/>
    <property type="gene ID" value="ENSG00000171119.3"/>
</dbReference>
<dbReference type="GeneID" id="4902"/>
<dbReference type="KEGG" id="hsa:4902"/>
<dbReference type="MANE-Select" id="ENST00000303212.3">
    <property type="protein sequence ID" value="ENSP00000302648.1"/>
    <property type="RefSeq nucleotide sequence ID" value="NM_004558.5"/>
    <property type="RefSeq protein sequence ID" value="NP_004549.1"/>
</dbReference>
<dbReference type="UCSC" id="uc002mde.4">
    <property type="organism name" value="human"/>
</dbReference>
<dbReference type="AGR" id="HGNC:8007"/>
<dbReference type="CTD" id="4902"/>
<dbReference type="DisGeNET" id="4902"/>
<dbReference type="GeneCards" id="NRTN"/>
<dbReference type="HGNC" id="HGNC:8007">
    <property type="gene designation" value="NRTN"/>
</dbReference>
<dbReference type="HPA" id="ENSG00000171119">
    <property type="expression patterns" value="Tissue enhanced (heart muscle, pancreas)"/>
</dbReference>
<dbReference type="MalaCards" id="NRTN"/>
<dbReference type="MIM" id="602018">
    <property type="type" value="gene"/>
</dbReference>
<dbReference type="neXtProt" id="NX_Q99748"/>
<dbReference type="OpenTargets" id="ENSG00000171119"/>
<dbReference type="Orphanet" id="388">
    <property type="disease" value="Hirschsprung disease"/>
</dbReference>
<dbReference type="PharmGKB" id="PA31785"/>
<dbReference type="VEuPathDB" id="HostDB:ENSG00000171119"/>
<dbReference type="eggNOG" id="ENOG502QWH4">
    <property type="taxonomic scope" value="Eukaryota"/>
</dbReference>
<dbReference type="GeneTree" id="ENSGT00950000182993"/>
<dbReference type="HOGENOM" id="CLU_102221_1_1_1"/>
<dbReference type="InParanoid" id="Q99748"/>
<dbReference type="OMA" id="NQARRTK"/>
<dbReference type="OrthoDB" id="9936891at2759"/>
<dbReference type="PAN-GO" id="Q99748">
    <property type="GO annotations" value="1 GO annotation based on evolutionary models"/>
</dbReference>
<dbReference type="PhylomeDB" id="Q99748"/>
<dbReference type="TreeFam" id="TF332366"/>
<dbReference type="PathwayCommons" id="Q99748"/>
<dbReference type="Reactome" id="R-HSA-419037">
    <property type="pathway name" value="NCAM1 interactions"/>
</dbReference>
<dbReference type="Reactome" id="R-HSA-5673001">
    <property type="pathway name" value="RAF/MAP kinase cascade"/>
</dbReference>
<dbReference type="Reactome" id="R-HSA-8853659">
    <property type="pathway name" value="RET signaling"/>
</dbReference>
<dbReference type="SignaLink" id="Q99748"/>
<dbReference type="SIGNOR" id="Q99748"/>
<dbReference type="BioGRID-ORCS" id="4902">
    <property type="hits" value="7 hits in 1146 CRISPR screens"/>
</dbReference>
<dbReference type="ChiTaRS" id="NRTN">
    <property type="organism name" value="human"/>
</dbReference>
<dbReference type="GenomeRNAi" id="4902"/>
<dbReference type="Pharos" id="Q99748">
    <property type="development level" value="Tbio"/>
</dbReference>
<dbReference type="PRO" id="PR:Q99748"/>
<dbReference type="Proteomes" id="UP000005640">
    <property type="component" value="Chromosome 19"/>
</dbReference>
<dbReference type="RNAct" id="Q99748">
    <property type="molecule type" value="protein"/>
</dbReference>
<dbReference type="Bgee" id="ENSG00000171119">
    <property type="expression patterns" value="Expressed in apex of heart and 88 other cell types or tissues"/>
</dbReference>
<dbReference type="GO" id="GO:0005576">
    <property type="term" value="C:extracellular region"/>
    <property type="evidence" value="ECO:0000304"/>
    <property type="project" value="Reactome"/>
</dbReference>
<dbReference type="GO" id="GO:0005615">
    <property type="term" value="C:extracellular space"/>
    <property type="evidence" value="ECO:0000250"/>
    <property type="project" value="UniProt"/>
</dbReference>
<dbReference type="GO" id="GO:0030116">
    <property type="term" value="F:glial cell-derived neurotrophic factor receptor binding"/>
    <property type="evidence" value="ECO:0007669"/>
    <property type="project" value="InterPro"/>
</dbReference>
<dbReference type="GO" id="GO:0008083">
    <property type="term" value="F:growth factor activity"/>
    <property type="evidence" value="ECO:0000314"/>
    <property type="project" value="UniProtKB"/>
</dbReference>
<dbReference type="GO" id="GO:1904399">
    <property type="term" value="F:heparan sulfate binding"/>
    <property type="evidence" value="ECO:0000314"/>
    <property type="project" value="UniProtKB"/>
</dbReference>
<dbReference type="GO" id="GO:0030971">
    <property type="term" value="F:receptor tyrosine kinase binding"/>
    <property type="evidence" value="ECO:0007669"/>
    <property type="project" value="InterPro"/>
</dbReference>
<dbReference type="GO" id="GO:0005102">
    <property type="term" value="F:signaling receptor binding"/>
    <property type="evidence" value="ECO:0000304"/>
    <property type="project" value="ProtInc"/>
</dbReference>
<dbReference type="GO" id="GO:0007169">
    <property type="term" value="P:cell surface receptor protein tyrosine kinase signaling pathway"/>
    <property type="evidence" value="ECO:0000304"/>
    <property type="project" value="ProtInc"/>
</dbReference>
<dbReference type="GO" id="GO:0097696">
    <property type="term" value="P:cell surface receptor signaling pathway via STAT"/>
    <property type="evidence" value="ECO:0007669"/>
    <property type="project" value="Ensembl"/>
</dbReference>
<dbReference type="GO" id="GO:0035860">
    <property type="term" value="P:glial cell-derived neurotrophic factor receptor signaling pathway"/>
    <property type="evidence" value="ECO:0000314"/>
    <property type="project" value="UniProtKB"/>
</dbReference>
<dbReference type="GO" id="GO:0000165">
    <property type="term" value="P:MAPK cascade"/>
    <property type="evidence" value="ECO:0000304"/>
    <property type="project" value="ProtInc"/>
</dbReference>
<dbReference type="GO" id="GO:0021675">
    <property type="term" value="P:nerve development"/>
    <property type="evidence" value="ECO:0007669"/>
    <property type="project" value="Ensembl"/>
</dbReference>
<dbReference type="GO" id="GO:0007399">
    <property type="term" value="P:nervous system development"/>
    <property type="evidence" value="ECO:0000304"/>
    <property type="project" value="ProtInc"/>
</dbReference>
<dbReference type="GO" id="GO:0001755">
    <property type="term" value="P:neural crest cell migration"/>
    <property type="evidence" value="ECO:0000314"/>
    <property type="project" value="MGI"/>
</dbReference>
<dbReference type="GO" id="GO:0031175">
    <property type="term" value="P:neuron projection development"/>
    <property type="evidence" value="ECO:0000314"/>
    <property type="project" value="MGI"/>
</dbReference>
<dbReference type="CDD" id="cd19383">
    <property type="entry name" value="TGF_beta_Neurturin"/>
    <property type="match status" value="1"/>
</dbReference>
<dbReference type="FunFam" id="2.10.90.10:FF:000037">
    <property type="entry name" value="neurturin"/>
    <property type="match status" value="1"/>
</dbReference>
<dbReference type="Gene3D" id="2.10.90.10">
    <property type="entry name" value="Cystine-knot cytokines"/>
    <property type="match status" value="1"/>
</dbReference>
<dbReference type="InterPro" id="IPR029034">
    <property type="entry name" value="Cystine-knot_cytokine"/>
</dbReference>
<dbReference type="InterPro" id="IPR043401">
    <property type="entry name" value="GDNF_fam"/>
</dbReference>
<dbReference type="InterPro" id="IPR001839">
    <property type="entry name" value="TGF-b_C"/>
</dbReference>
<dbReference type="PANTHER" id="PTHR12173">
    <property type="entry name" value="GDNF SUBFAMILY OF TGF-BETA FAMILY"/>
    <property type="match status" value="1"/>
</dbReference>
<dbReference type="PANTHER" id="PTHR12173:SF3">
    <property type="entry name" value="NEURTURIN"/>
    <property type="match status" value="1"/>
</dbReference>
<dbReference type="Pfam" id="PF00019">
    <property type="entry name" value="TGF_beta"/>
    <property type="match status" value="1"/>
</dbReference>
<dbReference type="SUPFAM" id="SSF57501">
    <property type="entry name" value="Cystine-knot cytokines"/>
    <property type="match status" value="1"/>
</dbReference>
<dbReference type="PROSITE" id="PS51362">
    <property type="entry name" value="TGF_BETA_2"/>
    <property type="match status" value="1"/>
</dbReference>
<feature type="signal peptide" evidence="2">
    <location>
        <begin position="1"/>
        <end position="19"/>
    </location>
</feature>
<feature type="propeptide" id="PRO_0000034010" evidence="1">
    <location>
        <begin position="20"/>
        <end position="95"/>
    </location>
</feature>
<feature type="chain" id="PRO_0000034011" description="Neurturin">
    <location>
        <begin position="96"/>
        <end position="197"/>
    </location>
</feature>
<feature type="region of interest" description="Disordered" evidence="3">
    <location>
        <begin position="74"/>
        <end position="93"/>
    </location>
</feature>
<feature type="compositionally biased region" description="Basic residues" evidence="3">
    <location>
        <begin position="82"/>
        <end position="93"/>
    </location>
</feature>
<feature type="binding site" evidence="6">
    <location>
        <position position="149"/>
    </location>
    <ligand>
        <name>heparan sulfate group</name>
        <dbReference type="ChEBI" id="CHEBI:157750"/>
    </ligand>
</feature>
<feature type="binding site" evidence="6">
    <location>
        <position position="158"/>
    </location>
    <ligand>
        <name>heparan sulfate group</name>
        <dbReference type="ChEBI" id="CHEBI:157750"/>
    </ligand>
</feature>
<feature type="binding site" evidence="6">
    <location>
        <position position="160"/>
    </location>
    <ligand>
        <name>heparan sulfate group</name>
        <dbReference type="ChEBI" id="CHEBI:157750"/>
    </ligand>
</feature>
<feature type="binding site" evidence="6">
    <location>
        <position position="162"/>
    </location>
    <ligand>
        <name>heparan sulfate group</name>
        <dbReference type="ChEBI" id="CHEBI:157750"/>
    </ligand>
</feature>
<feature type="disulfide bond" evidence="6 7 14 15 16 17 18 19 20">
    <location>
        <begin position="103"/>
        <end position="165"/>
    </location>
</feature>
<feature type="disulfide bond" evidence="6 7 14 15 16 17 18 19 20">
    <location>
        <begin position="130"/>
        <end position="194"/>
    </location>
</feature>
<feature type="disulfide bond" evidence="6 7 14 15 16 17 18 19 20">
    <location>
        <begin position="134"/>
        <end position="196"/>
    </location>
</feature>
<feature type="disulfide bond" description="Interchain" evidence="6 7 14 15 17 18 19 20">
    <location>
        <position position="164"/>
    </location>
</feature>
<feature type="sequence variant" id="VAR_009498" description="May contribute to Hirschsprung disease in patients carrying a RET mutation; dbSNP:rs575363266." evidence="9">
    <original>A</original>
    <variation>S</variation>
    <location>
        <position position="96"/>
    </location>
</feature>
<feature type="mutagenesis site" description="Strongly decreased binding to heparan sulfate." evidence="6">
    <original>RVRAQ</original>
    <variation>AVAAA</variation>
    <location>
        <begin position="158"/>
        <end position="162"/>
    </location>
</feature>
<feature type="strand" evidence="21">
    <location>
        <begin position="102"/>
        <end position="111"/>
    </location>
</feature>
<feature type="helix" evidence="21">
    <location>
        <begin position="112"/>
        <end position="115"/>
    </location>
</feature>
<feature type="strand" evidence="21">
    <location>
        <begin position="117"/>
        <end position="119"/>
    </location>
</feature>
<feature type="strand" evidence="21">
    <location>
        <begin position="124"/>
        <end position="133"/>
    </location>
</feature>
<feature type="helix" evidence="21">
    <location>
        <begin position="140"/>
        <end position="150"/>
    </location>
</feature>
<feature type="strand" evidence="21">
    <location>
        <begin position="165"/>
        <end position="170"/>
    </location>
</feature>
<feature type="strand" evidence="21">
    <location>
        <begin position="172"/>
        <end position="177"/>
    </location>
</feature>
<feature type="strand" evidence="21">
    <location>
        <begin position="183"/>
        <end position="188"/>
    </location>
</feature>
<feature type="strand" evidence="21">
    <location>
        <begin position="190"/>
        <end position="196"/>
    </location>
</feature>